<keyword id="KW-0175">Coiled coil</keyword>
<keyword id="KW-1185">Reference proteome</keyword>
<keyword id="KW-0804">Transcription</keyword>
<keyword id="KW-0805">Transcription regulation</keyword>
<gene>
    <name evidence="5" type="primary">ZPR1</name>
    <name evidence="7" type="ordered locus">At2g45450</name>
    <name evidence="8" type="ORF">F4L23.4</name>
</gene>
<sequence>MQREHKTHNKLSFIYITPLYISPINQTRLTYLSSSFLLSSSSKMCLSSSETFSDTPTRLVLYLKTQSHVRIPRLSRRRRMWREEKKMEMINLKLYVENQNIIRENEKLKKKALLLHQENKTLFSLLQTKKLSSVHK</sequence>
<proteinExistence type="evidence at protein level"/>
<protein>
    <recommendedName>
        <fullName evidence="5">Protein LITTLE ZIPPER 1</fullName>
    </recommendedName>
</protein>
<reference key="1">
    <citation type="journal article" date="1999" name="Nature">
        <title>Sequence and analysis of chromosome 2 of the plant Arabidopsis thaliana.</title>
        <authorList>
            <person name="Lin X."/>
            <person name="Kaul S."/>
            <person name="Rounsley S.D."/>
            <person name="Shea T.P."/>
            <person name="Benito M.-I."/>
            <person name="Town C.D."/>
            <person name="Fujii C.Y."/>
            <person name="Mason T.M."/>
            <person name="Bowman C.L."/>
            <person name="Barnstead M.E."/>
            <person name="Feldblyum T.V."/>
            <person name="Buell C.R."/>
            <person name="Ketchum K.A."/>
            <person name="Lee J.J."/>
            <person name="Ronning C.M."/>
            <person name="Koo H.L."/>
            <person name="Moffat K.S."/>
            <person name="Cronin L.A."/>
            <person name="Shen M."/>
            <person name="Pai G."/>
            <person name="Van Aken S."/>
            <person name="Umayam L."/>
            <person name="Tallon L.J."/>
            <person name="Gill J.E."/>
            <person name="Adams M.D."/>
            <person name="Carrera A.J."/>
            <person name="Creasy T.H."/>
            <person name="Goodman H.M."/>
            <person name="Somerville C.R."/>
            <person name="Copenhaver G.P."/>
            <person name="Preuss D."/>
            <person name="Nierman W.C."/>
            <person name="White O."/>
            <person name="Eisen J.A."/>
            <person name="Salzberg S.L."/>
            <person name="Fraser C.M."/>
            <person name="Venter J.C."/>
        </authorList>
    </citation>
    <scope>NUCLEOTIDE SEQUENCE [LARGE SCALE GENOMIC DNA]</scope>
    <source>
        <strain>cv. Columbia</strain>
    </source>
</reference>
<reference key="2">
    <citation type="journal article" date="2017" name="Plant J.">
        <title>Araport11: a complete reannotation of the Arabidopsis thaliana reference genome.</title>
        <authorList>
            <person name="Cheng C.Y."/>
            <person name="Krishnakumar V."/>
            <person name="Chan A.P."/>
            <person name="Thibaud-Nissen F."/>
            <person name="Schobel S."/>
            <person name="Town C.D."/>
        </authorList>
    </citation>
    <scope>GENOME REANNOTATION</scope>
    <source>
        <strain evidence="9">cv. Columbia</strain>
    </source>
</reference>
<reference key="3">
    <citation type="submission" date="2002-03" db="EMBL/GenBank/DDBJ databases">
        <title>Full-length cDNA from Arabidopsis thaliana.</title>
        <authorList>
            <person name="Brover V.V."/>
            <person name="Troukhan M.E."/>
            <person name="Alexandrov N.A."/>
            <person name="Lu Y.-P."/>
            <person name="Flavell R.B."/>
            <person name="Feldmann K.A."/>
        </authorList>
    </citation>
    <scope>NUCLEOTIDE SEQUENCE [LARGE SCALE MRNA] OF 27-136</scope>
</reference>
<reference key="4">
    <citation type="submission" date="2006-02" db="EMBL/GenBank/DDBJ databases">
        <title>Arabidopsis ORF clones.</title>
        <authorList>
            <person name="Shinn P."/>
            <person name="Chen H."/>
            <person name="Kim C.J."/>
            <person name="Ecker J.R."/>
        </authorList>
    </citation>
    <scope>NUCLEOTIDE SEQUENCE [LARGE SCALE MRNA] OF 44-136</scope>
    <source>
        <strain>cv. Columbia</strain>
    </source>
</reference>
<reference key="5">
    <citation type="journal article" date="2007" name="Plant Cell">
        <title>A feedback regulatory module formed by LITTLE ZIPPER and HD-ZIPIII genes.</title>
        <authorList>
            <person name="Wenkel S."/>
            <person name="Emery J."/>
            <person name="Hou B.H."/>
            <person name="Evans M.M."/>
            <person name="Barton M.K."/>
        </authorList>
    </citation>
    <scope>GENE FAMILY</scope>
    <scope>NOMENCLATURE</scope>
    <scope>INDUCTION</scope>
    <scope>TISSUE SPECIFICITY</scope>
    <scope>INTERACTION WITH REV</scope>
</reference>
<reference key="6">
    <citation type="journal article" date="2011" name="EMBO Rep.">
        <title>Regulation of protein function by 'microProteins'.</title>
        <authorList>
            <person name="Staudt A.C."/>
            <person name="Wenkel S."/>
        </authorList>
    </citation>
    <scope>REVIEW</scope>
</reference>
<reference key="7">
    <citation type="journal article" date="2013" name="Mech. Dev.">
        <title>Control of stem cell homeostasis via interlocking microRNA and microProtein feedback loops.</title>
        <authorList>
            <person name="Brandt R."/>
            <person name="Xie Y."/>
            <person name="Musielak T."/>
            <person name="Graeff M."/>
            <person name="Stierhof Y.D."/>
            <person name="Huang H."/>
            <person name="Liu C.M."/>
            <person name="Wenkel S."/>
        </authorList>
    </citation>
    <scope>INDUCTION BY REV</scope>
</reference>
<reference key="8">
    <citation type="journal article" date="2014" name="Mol. Phylogenet. Evol.">
        <title>Origin of a novel regulatory module by duplication and degeneration of an ancient plant transcription factor.</title>
        <authorList>
            <person name="Floyd S.K."/>
            <person name="Ryan J.G."/>
            <person name="Conway S.J."/>
            <person name="Brenner E."/>
            <person name="Burris K.P."/>
            <person name="Burris J.N."/>
            <person name="Chen T."/>
            <person name="Edger P.P."/>
            <person name="Graham S.W."/>
            <person name="Leebens-Mack J.H."/>
            <person name="Pires J.C."/>
            <person name="Rothfels C.J."/>
            <person name="Sigel E.M."/>
            <person name="Stevenson D.W."/>
            <person name="Neal Stewart C. Jr."/>
            <person name="Wong G.K."/>
            <person name="Bowman J.L."/>
        </authorList>
    </citation>
    <scope>GENE FAMILY</scope>
</reference>
<comment type="function">
    <text evidence="1">Competitive inhibitor of the HD-ZIPIII transcription factors in shoot apical meristem (SAM) development. Acts by forming non-functional heterodimers. Part of a negative feedback loop. Essential for proper functioning of stem cells in the SAM.</text>
</comment>
<comment type="subunit">
    <text evidence="3">Interacts with REV.</text>
</comment>
<comment type="tissue specificity">
    <text evidence="3">Expressed in the adaxial epidermis of the cotyledons and in the vascular cylinder of wild-type torpedo stage embryos.</text>
</comment>
<comment type="induction">
    <text evidence="3 4">Up-regulated in response to increased HD-ZIPIII activity (PubMed:18055602). Up-regulated by REV (PubMed:22781836).</text>
</comment>
<comment type="sequence caution" evidence="6">
    <conflict type="erroneous gene model prediction">
        <sequence resource="EMBL-CDS" id="AAB82619"/>
    </conflict>
</comment>
<comment type="sequence caution" evidence="6">
    <conflict type="erroneous initiation">
        <sequence resource="EMBL-CDS" id="AAM64342"/>
    </conflict>
    <text>Truncated N-terminus.</text>
</comment>
<accession>F4IG60</accession>
<accession>O22128</accession>
<evidence type="ECO:0000250" key="1">
    <source>
        <dbReference type="UniProtKB" id="Q9LXI8"/>
    </source>
</evidence>
<evidence type="ECO:0000255" key="2"/>
<evidence type="ECO:0000269" key="3">
    <source>
    </source>
</evidence>
<evidence type="ECO:0000269" key="4">
    <source>
    </source>
</evidence>
<evidence type="ECO:0000303" key="5">
    <source>
    </source>
</evidence>
<evidence type="ECO:0000305" key="6"/>
<evidence type="ECO:0000312" key="7">
    <source>
        <dbReference type="Araport" id="AT2G45450"/>
    </source>
</evidence>
<evidence type="ECO:0000312" key="8">
    <source>
        <dbReference type="EMBL" id="AAB82619.2"/>
    </source>
</evidence>
<evidence type="ECO:0000312" key="9">
    <source>
        <dbReference type="Proteomes" id="UP000006548"/>
    </source>
</evidence>
<feature type="chain" id="PRO_0000433473" description="Protein LITTLE ZIPPER 1">
    <location>
        <begin position="1"/>
        <end position="136"/>
    </location>
</feature>
<feature type="coiled-coil region" evidence="2">
    <location>
        <begin position="97"/>
        <end position="122"/>
    </location>
</feature>
<name>ZPR1_ARATH</name>
<dbReference type="EMBL" id="AC002387">
    <property type="protein sequence ID" value="AAB82619.2"/>
    <property type="status" value="ALT_SEQ"/>
    <property type="molecule type" value="Genomic_DNA"/>
</dbReference>
<dbReference type="EMBL" id="CP002685">
    <property type="protein sequence ID" value="AEC10555.1"/>
    <property type="molecule type" value="Genomic_DNA"/>
</dbReference>
<dbReference type="EMBL" id="AY086269">
    <property type="protein sequence ID" value="AAM64342.1"/>
    <property type="status" value="ALT_INIT"/>
    <property type="molecule type" value="mRNA"/>
</dbReference>
<dbReference type="EMBL" id="BT024543">
    <property type="protein sequence ID" value="ABD38882.1"/>
    <property type="molecule type" value="mRNA"/>
</dbReference>
<dbReference type="PIR" id="F84890">
    <property type="entry name" value="F84890"/>
</dbReference>
<dbReference type="RefSeq" id="NP_566042.2">
    <property type="nucleotide sequence ID" value="NM_130107.4"/>
</dbReference>
<dbReference type="SMR" id="F4IG60"/>
<dbReference type="FunCoup" id="F4IG60">
    <property type="interactions" value="230"/>
</dbReference>
<dbReference type="IntAct" id="F4IG60">
    <property type="interactions" value="1"/>
</dbReference>
<dbReference type="STRING" id="3702.F4IG60"/>
<dbReference type="PaxDb" id="3702-AT2G45450.1"/>
<dbReference type="ProteomicsDB" id="242981"/>
<dbReference type="EnsemblPlants" id="AT2G45450.1">
    <property type="protein sequence ID" value="AT2G45450.1"/>
    <property type="gene ID" value="AT2G45450"/>
</dbReference>
<dbReference type="GeneID" id="819153"/>
<dbReference type="Gramene" id="AT2G45450.1">
    <property type="protein sequence ID" value="AT2G45450.1"/>
    <property type="gene ID" value="AT2G45450"/>
</dbReference>
<dbReference type="KEGG" id="ath:AT2G45450"/>
<dbReference type="Araport" id="AT2G45450"/>
<dbReference type="TAIR" id="AT2G45450">
    <property type="gene designation" value="ZPR1"/>
</dbReference>
<dbReference type="eggNOG" id="ENOG502S4ZT">
    <property type="taxonomic scope" value="Eukaryota"/>
</dbReference>
<dbReference type="HOGENOM" id="CLU_162242_0_0_1"/>
<dbReference type="InParanoid" id="F4IG60"/>
<dbReference type="OMA" id="CFKATET"/>
<dbReference type="PRO" id="PR:F4IG60"/>
<dbReference type="Proteomes" id="UP000006548">
    <property type="component" value="Chromosome 2"/>
</dbReference>
<dbReference type="ExpressionAtlas" id="F4IG60">
    <property type="expression patterns" value="baseline and differential"/>
</dbReference>
<dbReference type="GO" id="GO:0009943">
    <property type="term" value="P:adaxial/abaxial axis specification"/>
    <property type="evidence" value="ECO:0000315"/>
    <property type="project" value="TAIR"/>
</dbReference>
<dbReference type="GO" id="GO:0010358">
    <property type="term" value="P:leaf shaping"/>
    <property type="evidence" value="ECO:0000315"/>
    <property type="project" value="TAIR"/>
</dbReference>
<dbReference type="InterPro" id="IPR039312">
    <property type="entry name" value="ZPR"/>
</dbReference>
<dbReference type="PANTHER" id="PTHR33601:SF22">
    <property type="entry name" value="PROTEIN LITTLE ZIPPER 1"/>
    <property type="match status" value="1"/>
</dbReference>
<dbReference type="PANTHER" id="PTHR33601">
    <property type="entry name" value="PROTEIN LITTLE ZIPPER 4"/>
    <property type="match status" value="1"/>
</dbReference>
<organism evidence="9">
    <name type="scientific">Arabidopsis thaliana</name>
    <name type="common">Mouse-ear cress</name>
    <dbReference type="NCBI Taxonomy" id="3702"/>
    <lineage>
        <taxon>Eukaryota</taxon>
        <taxon>Viridiplantae</taxon>
        <taxon>Streptophyta</taxon>
        <taxon>Embryophyta</taxon>
        <taxon>Tracheophyta</taxon>
        <taxon>Spermatophyta</taxon>
        <taxon>Magnoliopsida</taxon>
        <taxon>eudicotyledons</taxon>
        <taxon>Gunneridae</taxon>
        <taxon>Pentapetalae</taxon>
        <taxon>rosids</taxon>
        <taxon>malvids</taxon>
        <taxon>Brassicales</taxon>
        <taxon>Brassicaceae</taxon>
        <taxon>Camelineae</taxon>
        <taxon>Arabidopsis</taxon>
    </lineage>
</organism>